<keyword id="KW-0002">3D-structure</keyword>
<keyword id="KW-0046">Antibiotic resistance</keyword>
<keyword id="KW-1015">Disulfide bond</keyword>
<keyword id="KW-0378">Hydrolase</keyword>
<keyword id="KW-0574">Periplasm</keyword>
<keyword id="KW-0614">Plasmid</keyword>
<keyword id="KW-0732">Signal</keyword>
<keyword id="KW-0814">Transposable element</keyword>
<feature type="signal peptide" evidence="1">
    <location>
        <begin position="1"/>
        <end position="19"/>
    </location>
</feature>
<feature type="chain" id="PRO_0000017030" description="Beta-lactamase OXA-10">
    <location>
        <begin position="20"/>
        <end position="266"/>
    </location>
</feature>
<feature type="active site" description="Acyl-ester intermediate" evidence="4 5 17 27">
    <location>
        <position position="67"/>
    </location>
</feature>
<feature type="binding site" evidence="5 27">
    <location>
        <position position="115"/>
    </location>
    <ligand>
        <name>a beta-lactam</name>
        <dbReference type="ChEBI" id="CHEBI:35627"/>
    </ligand>
</feature>
<feature type="binding site" evidence="5 27">
    <location>
        <position position="206"/>
    </location>
    <ligand>
        <name>a beta-lactam</name>
        <dbReference type="ChEBI" id="CHEBI:35627"/>
    </ligand>
</feature>
<feature type="binding site" evidence="5 27">
    <location>
        <position position="208"/>
    </location>
    <ligand>
        <name>a beta-lactam</name>
        <dbReference type="ChEBI" id="CHEBI:35627"/>
    </ligand>
</feature>
<feature type="binding site" evidence="5 27">
    <location>
        <position position="250"/>
    </location>
    <ligand>
        <name>a beta-lactam</name>
        <dbReference type="ChEBI" id="CHEBI:35627"/>
    </ligand>
</feature>
<feature type="modified residue" description="N6-carboxylysine" evidence="3 4 5 14 15 16 17 18 19 20 21 26">
    <location>
        <position position="70"/>
    </location>
</feature>
<feature type="disulfide bond" evidence="17 18 19 20">
    <location>
        <begin position="44"/>
        <end position="51"/>
    </location>
</feature>
<feature type="mutagenesis site" description="No effect on catalytic efficiency with respect to penicillins, cephalosporins or carbapenems. No effect on resistance to penicillins, cephalosporins or carbapenems in C600Z1 E.coli strain. Slightly increases catalytic efficiency, about 4-fold, with respect to carbapenems; when associated with L-117. Decreases catalytic efficiency, about 10-fold, with respect to some cephalosporins, but about 80-fold, with respect to cefotaxime; when associated with L-117. Decreases catalytic efficiency, between 3- and 10-fold, with respect to penicillins; when associated with L-117. Decreases resistance to cephalosporins in C600Z1 E.coli strain; when associated with L-117." evidence="6">
    <original>T</original>
    <variation>M</variation>
    <location>
        <position position="26"/>
    </location>
</feature>
<feature type="mutagenesis site" description="Abolishes catalytic activity." evidence="4">
    <original>K</original>
    <variation>A</variation>
    <location>
        <position position="70"/>
    </location>
</feature>
<feature type="mutagenesis site" description="Slightly increases catalytic efficiency, about 4-fold, with respect to carbapenems; when associated with M-26. Decreases catalytic efficiency, about 10-fold, with respect to some cephalosporins, but about 80-fold, with respect to cefotaxime; when associated with M-26. Decreases catalytic efficiency, between 3- and 10-fold, with respect to penicillins; when associated with M-26. Decreases resistance to cephalosporins in C600Z1 E.coli strain; when associated with M-26." evidence="6">
    <original>V</original>
    <variation>L</variation>
    <location>
        <position position="117"/>
    </location>
</feature>
<feature type="mutagenesis site" description="Increases resistance to ceftazidime about 30-fold in P.aeruginosa strains PA01 and PA14; when associated with D-157." evidence="7">
    <original>F</original>
    <variation>S</variation>
    <location>
        <position position="153"/>
    </location>
</feature>
<feature type="mutagenesis site" description="Drastically reduces catalytic efficiency, between about 50- to 30,000-fold, with respect to different beta-lactams. Decreases thermal stability, despite unaltered overall structure. Reduces or abolishes carboxylation of K-70." evidence="5">
    <original>W</original>
    <variation>A</variation>
    <variation>F</variation>
    <variation>G</variation>
    <variation>H</variation>
    <location>
        <position position="154"/>
    </location>
</feature>
<feature type="mutagenesis site" description="Increases resistance to ceftazidime about 15-fold in P.aeruginosa strains PA01 and PA14. Increases resistance to ceftazidime about 30-fold in P.aeruginosa strains PA01 and PA14; when associated with S-153." evidence="7">
    <original>G</original>
    <variation>D</variation>
    <location>
        <position position="157"/>
    </location>
</feature>
<feature type="strand" evidence="31">
    <location>
        <begin position="22"/>
        <end position="24"/>
    </location>
</feature>
<feature type="helix" evidence="31">
    <location>
        <begin position="26"/>
        <end position="28"/>
    </location>
</feature>
<feature type="helix" evidence="31">
    <location>
        <begin position="29"/>
        <end position="34"/>
    </location>
</feature>
<feature type="strand" evidence="31">
    <location>
        <begin position="39"/>
        <end position="47"/>
    </location>
</feature>
<feature type="strand" evidence="31">
    <location>
        <begin position="50"/>
        <end position="54"/>
    </location>
</feature>
<feature type="helix" evidence="31">
    <location>
        <begin position="56"/>
        <end position="59"/>
    </location>
</feature>
<feature type="helix" evidence="31">
    <location>
        <begin position="66"/>
        <end position="69"/>
    </location>
</feature>
<feature type="helix" evidence="31">
    <location>
        <begin position="70"/>
        <end position="79"/>
    </location>
</feature>
<feature type="strand" evidence="28">
    <location>
        <begin position="81"/>
        <end position="83"/>
    </location>
</feature>
<feature type="helix" evidence="31">
    <location>
        <begin position="100"/>
        <end position="102"/>
    </location>
</feature>
<feature type="helix" evidence="31">
    <location>
        <begin position="108"/>
        <end position="113"/>
    </location>
</feature>
<feature type="helix" evidence="31">
    <location>
        <begin position="117"/>
        <end position="127"/>
    </location>
</feature>
<feature type="helix" evidence="31">
    <location>
        <begin position="129"/>
        <end position="138"/>
    </location>
</feature>
<feature type="strand" evidence="31">
    <location>
        <begin position="146"/>
        <end position="148"/>
    </location>
</feature>
<feature type="turn" evidence="29">
    <location>
        <begin position="150"/>
        <end position="155"/>
    </location>
</feature>
<feature type="strand" evidence="29">
    <location>
        <begin position="156"/>
        <end position="158"/>
    </location>
</feature>
<feature type="helix" evidence="31">
    <location>
        <begin position="163"/>
        <end position="174"/>
    </location>
</feature>
<feature type="strand" evidence="31">
    <location>
        <begin position="178"/>
        <end position="180"/>
    </location>
</feature>
<feature type="helix" evidence="31">
    <location>
        <begin position="182"/>
        <end position="191"/>
    </location>
</feature>
<feature type="strand" evidence="31">
    <location>
        <begin position="193"/>
        <end position="197"/>
    </location>
</feature>
<feature type="strand" evidence="31">
    <location>
        <begin position="200"/>
        <end position="208"/>
    </location>
</feature>
<feature type="strand" evidence="30">
    <location>
        <begin position="211"/>
        <end position="213"/>
    </location>
</feature>
<feature type="strand" evidence="31">
    <location>
        <begin position="214"/>
        <end position="228"/>
    </location>
</feature>
<feature type="strand" evidence="31">
    <location>
        <begin position="231"/>
        <end position="243"/>
    </location>
</feature>
<feature type="helix" evidence="31">
    <location>
        <begin position="244"/>
        <end position="248"/>
    </location>
</feature>
<feature type="helix" evidence="31">
    <location>
        <begin position="249"/>
        <end position="260"/>
    </location>
</feature>
<evidence type="ECO:0000255" key="1"/>
<evidence type="ECO:0000255" key="2">
    <source>
        <dbReference type="PROSITE-ProRule" id="PRU10103"/>
    </source>
</evidence>
<evidence type="ECO:0000269" key="3">
    <source>
    </source>
</evidence>
<evidence type="ECO:0000269" key="4">
    <source>
    </source>
</evidence>
<evidence type="ECO:0000269" key="5">
    <source>
    </source>
</evidence>
<evidence type="ECO:0000269" key="6">
    <source>
    </source>
</evidence>
<evidence type="ECO:0000269" key="7">
    <source>
    </source>
</evidence>
<evidence type="ECO:0000269" key="8">
    <source>
    </source>
</evidence>
<evidence type="ECO:0000303" key="9">
    <source>
    </source>
</evidence>
<evidence type="ECO:0000303" key="10">
    <source>
    </source>
</evidence>
<evidence type="ECO:0000303" key="11">
    <source>
    </source>
</evidence>
<evidence type="ECO:0000303" key="12">
    <source>
    </source>
</evidence>
<evidence type="ECO:0000305" key="13"/>
<evidence type="ECO:0007744" key="14">
    <source>
        <dbReference type="PDB" id="1E4D"/>
    </source>
</evidence>
<evidence type="ECO:0007744" key="15">
    <source>
        <dbReference type="PDB" id="1K4E"/>
    </source>
</evidence>
<evidence type="ECO:0007744" key="16">
    <source>
        <dbReference type="PDB" id="1K4F"/>
    </source>
</evidence>
<evidence type="ECO:0007744" key="17">
    <source>
        <dbReference type="PDB" id="1K54"/>
    </source>
</evidence>
<evidence type="ECO:0007744" key="18">
    <source>
        <dbReference type="PDB" id="1K55"/>
    </source>
</evidence>
<evidence type="ECO:0007744" key="19">
    <source>
        <dbReference type="PDB" id="1K56"/>
    </source>
</evidence>
<evidence type="ECO:0007744" key="20">
    <source>
        <dbReference type="PDB" id="1K57"/>
    </source>
</evidence>
<evidence type="ECO:0007744" key="21">
    <source>
        <dbReference type="PDB" id="1K6S"/>
    </source>
</evidence>
<evidence type="ECO:0007744" key="22">
    <source>
        <dbReference type="PDB" id="2HP5"/>
    </source>
</evidence>
<evidence type="ECO:0007744" key="23">
    <source>
        <dbReference type="PDB" id="2HP6"/>
    </source>
</evidence>
<evidence type="ECO:0007744" key="24">
    <source>
        <dbReference type="PDB" id="2HP9"/>
    </source>
</evidence>
<evidence type="ECO:0007744" key="25">
    <source>
        <dbReference type="PDB" id="2HPB"/>
    </source>
</evidence>
<evidence type="ECO:0007744" key="26">
    <source>
        <dbReference type="PDB" id="2RL3"/>
    </source>
</evidence>
<evidence type="ECO:0007744" key="27">
    <source>
        <dbReference type="PDB" id="2WGI"/>
    </source>
</evidence>
<evidence type="ECO:0007829" key="28">
    <source>
        <dbReference type="PDB" id="1E3U"/>
    </source>
</evidence>
<evidence type="ECO:0007829" key="29">
    <source>
        <dbReference type="PDB" id="5MOZ"/>
    </source>
</evidence>
<evidence type="ECO:0007829" key="30">
    <source>
        <dbReference type="PDB" id="7B3S"/>
    </source>
</evidence>
<evidence type="ECO:0007829" key="31">
    <source>
        <dbReference type="PDB" id="7L5V"/>
    </source>
</evidence>
<comment type="function">
    <text evidence="4 5 6 7 8">Class D beta-lactamase which confers resistance to the beta-lactam antibiotics, including penicillin, carbenicillin and oxacillin, and also some cephalosporins (PubMed:11724923, PubMed:36129295, PubMed:8215276). Confers weak resistance to some carbapenems, in E.coli strain C600Z1 (PubMed:30397053). Acts via hydrolysis of the beta-lactam ring (PubMed:11724923, PubMed:19860471, PubMed:30397053, PubMed:8215276). Has penicillin- and cephalosporin-hydrolyzing activities (PubMed:11724923, PubMed:19860471, PubMed:30397053).</text>
</comment>
<comment type="catalytic activity">
    <reaction evidence="2 4 5 6 8">
        <text>a beta-lactam + H2O = a substituted beta-amino acid</text>
        <dbReference type="Rhea" id="RHEA:20401"/>
        <dbReference type="ChEBI" id="CHEBI:15377"/>
        <dbReference type="ChEBI" id="CHEBI:35627"/>
        <dbReference type="ChEBI" id="CHEBI:140347"/>
        <dbReference type="EC" id="3.5.2.6"/>
    </reaction>
</comment>
<comment type="activity regulation">
    <text evidence="5">Activated, with respect to most beta-lactam substrates, in the presence of 0.05 M sodium bicarbonate.</text>
</comment>
<comment type="biophysicochemical properties">
    <kinetics>
        <KM evidence="4">23 uM for benzylpenicillin (in the presence of 0.05 M NaHCO3 at pH 7.0)</KM>
        <KM evidence="5">20 uM for benzylpenicillin (in the presence of 0.05 M NaHCO3 at pH 7.0 and 25 degrees Celsius)</KM>
        <KM evidence="4">34 uM for ampicillin (in the presence of 0.05 M NaHCO3 at pH 7.0)</KM>
        <KM evidence="5">35 uM for ampicillin (in the presence of 0.05 M NaHCO3 at pH 7.0 and 25 degrees Celsius)</KM>
        <KM evidence="4">92 uM for carbenicillin (in the presence of 0.05 M NaHCO3 at pH 7.0)</KM>
        <KM evidence="4">29 uM for oxacillin (in the presence of 0.05 M NaHCO3 at pH 7.0)</KM>
        <KM evidence="5">100 uM for oxacillin (in the presence of 0.05 M NaHCO3 at pH 7.0 and 25 degrees Celsius)</KM>
        <KM evidence="4">114 uM for cloxacillin (in the presence of 0.05 M NaHCO3 at pH 7.0)</KM>
        <KM evidence="5">110 uM for cloxacillin (in the presence of 0.05 M NaHCO3 at pH 7.0 and 25 degrees Celsius)</KM>
        <KM evidence="4">374 uM for cephaloridine (in the presence of 0.05 M NaHCO3 at pH 7.0)</KM>
        <KM evidence="5">400 uM for cephaloridine (in the presence of 0.05 M NaHCO3 at pH 7.0 and 25 degrees Celsius)</KM>
        <KM evidence="4">32 uM for cephalothin (in the presence of 0.05 M NaHCO3 at pH 7.0)</KM>
        <KM evidence="5">7 uM for cephalothin (in the presence of 0.05 M NaHCO3 at pH 7.0 and 25 degrees Celsius)</KM>
        <KM evidence="5">10 uM for nitrocefin (in the presence of 0.05 M NaHCO3 at pH 7.0 and 25 degrees Celsius)</KM>
        <text evidence="4 5">kcat is 109 sec(-1) with benzylpenicillin as substrate (in the presence of 0.05 M NaHCO3 at pH 7.0) (PubMed:11724923). kcat is 120 sec(-1) with benzylpenicillin as substrate (in the presence of 0.05 M NaHCO3 at pH 7.0 and 25 degrees Celsius) (PubMed:19860471). kcat is 143 sec(-1) with ampicillin as substrate (in the presence of 0.05 M NaHCO3 at pH 7.0) (PubMed:11724923). kcat is 220 sec(-1) with ampicillin as substrate (in the presence of 0.05 M NaHCO3 at pH 7.0 and 25 degrees Celsius) (PubMed:19860471). kcat is 112 sec(-1) with carbenicillin as substrate (in the presence of 0.05 M NaHCO3 at pH 7.0) (PubMed:11724923). kcat is 1261 sec(-1) with oxacillin as substrate (in the presence of 0.05 M NaHCO3 at pH 7.0) (PubMed:11724923). kcat is 300 sec(-1) with oxacillin as substrate (in the presence of 0.05 M NaHCO3 at pH 7.0 and 25 degrees Celsius) (PubMed:19860471). kcat is 1533 sec(-1) with cloxacillin as substrate (in the presence of 0.05 M NaHCO3 at pH 7.0) (PubMed:11724923). kcat is 120 sec(-1) with cloxacillin as substrate (in the presence of 0.05 M NaHCO3 at pH 7.0 and 25 degrees Celsius) (PubMed:19860471). kcat is 57 sec(-1) with cephaloridine as substrate (in the presence of 0.05 M NaHCO3 at pH 7.0) (PubMed:11724923). kcat is 70 sec(-1) with cephaloridine as substrate (in the presence of 0.05 M NaHCO3 at pH 7.0 and 25 degrees Celsius) (PubMed:19860471). kcat is 8.3 sec(-1) with cephalothin as substrate (in the presence of 0.05 M NaHCO3 at pH 7.0) (PubMed:11724923). kcat is 2.5 sec(-1) with cephalothin as substrate (in the presence of 0.05 M NaHCO3 at pH 7.0 and 25 degrees Celsius) (PubMed:19860471). kcat is 1700 sec(-1) with nitrocefin as substrate (in the presence of 0.05 M NaHCO3 at pH 7.0 and 25 degrees Celsius) (PubMed:19860471).</text>
    </kinetics>
    <phDependence>
        <text evidence="5">Optimum pH is between 6 and 7.</text>
    </phDependence>
</comment>
<comment type="subunit">
    <text evidence="3 4">Dimer.</text>
</comment>
<comment type="subcellular location">
    <subcellularLocation>
        <location evidence="4">Periplasm</location>
    </subcellularLocation>
</comment>
<comment type="similarity">
    <text evidence="13">Belongs to the class-D beta-lactamase family.</text>
</comment>
<sequence>MKTFAAYVIIACLSSTALAGSITENTSWNKEFSAEAVNGVFVLCKSSSKSCATNDLARASKEYLPASTFKIPNAIIGLETGVIKNEHQVFKWDGKPRAMKQWERDLTLRGAIQVSAVPVFQQIAREVGEVRMQKYLKKFSYGNQNISGGIDKFWLEGQLRISAVNQVEFLESLYLNKLSASKENQLIVKEALVTEAAPEYLVHSKTGFSGVGTESNPGVAWWVGWVEKETEVYFFAFNMDIDNESKLPLRKSIPTKIMESEGIIGG</sequence>
<dbReference type="EC" id="3.5.2.6" evidence="2 4 5 6 8"/>
<dbReference type="EMBL" id="U37105">
    <property type="protein sequence ID" value="AAB60534.1"/>
    <property type="molecule type" value="Genomic_DNA"/>
</dbReference>
<dbReference type="EMBL" id="J03427">
    <property type="protein sequence ID" value="AAA25648.1"/>
    <property type="molecule type" value="Genomic_DNA"/>
</dbReference>
<dbReference type="PIR" id="S06462">
    <property type="entry name" value="S06462"/>
</dbReference>
<dbReference type="PDB" id="1E3U">
    <property type="method" value="X-ray"/>
    <property type="resolution" value="1.66 A"/>
    <property type="chains" value="A/B/C/D=21-266"/>
</dbReference>
<dbReference type="PDB" id="1E4D">
    <property type="method" value="X-ray"/>
    <property type="resolution" value="1.80 A"/>
    <property type="chains" value="A/B/C/D=21-266"/>
</dbReference>
<dbReference type="PDB" id="1EWZ">
    <property type="method" value="X-ray"/>
    <property type="resolution" value="2.40 A"/>
    <property type="chains" value="A/B/C/D=21-266"/>
</dbReference>
<dbReference type="PDB" id="1FOF">
    <property type="method" value="X-ray"/>
    <property type="resolution" value="2.00 A"/>
    <property type="chains" value="A/B=20-265"/>
</dbReference>
<dbReference type="PDB" id="1K4E">
    <property type="method" value="X-ray"/>
    <property type="resolution" value="2.00 A"/>
    <property type="chains" value="A/B=20-266"/>
</dbReference>
<dbReference type="PDB" id="1K4F">
    <property type="method" value="X-ray"/>
    <property type="resolution" value="1.60 A"/>
    <property type="chains" value="A/B=20-266"/>
</dbReference>
<dbReference type="PDB" id="1K54">
    <property type="method" value="X-ray"/>
    <property type="resolution" value="1.70 A"/>
    <property type="chains" value="A/B/C/D=21-266"/>
</dbReference>
<dbReference type="PDB" id="1K55">
    <property type="method" value="X-ray"/>
    <property type="resolution" value="1.39 A"/>
    <property type="chains" value="A/B/C/D=21-266"/>
</dbReference>
<dbReference type="PDB" id="1K56">
    <property type="method" value="X-ray"/>
    <property type="resolution" value="1.70 A"/>
    <property type="chains" value="A/B/C/D=21-266"/>
</dbReference>
<dbReference type="PDB" id="1K57">
    <property type="method" value="X-ray"/>
    <property type="resolution" value="1.90 A"/>
    <property type="chains" value="A/B/C/D=21-266"/>
</dbReference>
<dbReference type="PDB" id="1K6R">
    <property type="method" value="X-ray"/>
    <property type="resolution" value="2.30 A"/>
    <property type="chains" value="A/B=20-266"/>
</dbReference>
<dbReference type="PDB" id="1K6S">
    <property type="method" value="X-ray"/>
    <property type="resolution" value="2.03 A"/>
    <property type="chains" value="A/B=20-266"/>
</dbReference>
<dbReference type="PDB" id="2HP5">
    <property type="method" value="X-ray"/>
    <property type="resolution" value="2.70 A"/>
    <property type="chains" value="A/B/C/D=20-266"/>
</dbReference>
<dbReference type="PDB" id="2HP6">
    <property type="method" value="X-ray"/>
    <property type="resolution" value="2.20 A"/>
    <property type="chains" value="A/B=20-266"/>
</dbReference>
<dbReference type="PDB" id="2HP9">
    <property type="method" value="X-ray"/>
    <property type="resolution" value="2.50 A"/>
    <property type="chains" value="A/B=20-266"/>
</dbReference>
<dbReference type="PDB" id="2HPB">
    <property type="method" value="X-ray"/>
    <property type="resolution" value="2.05 A"/>
    <property type="chains" value="A/B=20-266"/>
</dbReference>
<dbReference type="PDB" id="2RL3">
    <property type="method" value="X-ray"/>
    <property type="resolution" value="1.90 A"/>
    <property type="chains" value="A/B=20-266"/>
</dbReference>
<dbReference type="PDB" id="2WGI">
    <property type="method" value="X-ray"/>
    <property type="resolution" value="2.85 A"/>
    <property type="chains" value="A/B=21-266"/>
</dbReference>
<dbReference type="PDB" id="2WGV">
    <property type="method" value="X-ray"/>
    <property type="resolution" value="1.80 A"/>
    <property type="chains" value="A/B=20-266"/>
</dbReference>
<dbReference type="PDB" id="2WGW">
    <property type="method" value="X-ray"/>
    <property type="resolution" value="1.80 A"/>
    <property type="chains" value="A/B=20-266"/>
</dbReference>
<dbReference type="PDB" id="2WKH">
    <property type="method" value="X-ray"/>
    <property type="resolution" value="1.79 A"/>
    <property type="chains" value="A/B=20-266"/>
</dbReference>
<dbReference type="PDB" id="2WKI">
    <property type="method" value="X-ray"/>
    <property type="resolution" value="2.10 A"/>
    <property type="chains" value="A/B=20-266"/>
</dbReference>
<dbReference type="PDB" id="2X01">
    <property type="method" value="X-ray"/>
    <property type="resolution" value="1.90 A"/>
    <property type="chains" value="A/B=20-266"/>
</dbReference>
<dbReference type="PDB" id="2X02">
    <property type="method" value="X-ray"/>
    <property type="resolution" value="1.35 A"/>
    <property type="chains" value="A/B=20-266"/>
</dbReference>
<dbReference type="PDB" id="3LCE">
    <property type="method" value="X-ray"/>
    <property type="resolution" value="2.00 A"/>
    <property type="chains" value="A/B/C/D=21-266"/>
</dbReference>
<dbReference type="PDB" id="4S2O">
    <property type="method" value="X-ray"/>
    <property type="resolution" value="1.70 A"/>
    <property type="chains" value="A/B=20-265"/>
</dbReference>
<dbReference type="PDB" id="4WZ5">
    <property type="method" value="X-ray"/>
    <property type="resolution" value="1.60 A"/>
    <property type="chains" value="A/B/C/D=20-266"/>
</dbReference>
<dbReference type="PDB" id="5FQ9">
    <property type="method" value="X-ray"/>
    <property type="resolution" value="1.50 A"/>
    <property type="chains" value="A/B=20-266"/>
</dbReference>
<dbReference type="PDB" id="5MMY">
    <property type="method" value="X-ray"/>
    <property type="resolution" value="1.88 A"/>
    <property type="chains" value="A/B=20-264"/>
</dbReference>
<dbReference type="PDB" id="5MNU">
    <property type="method" value="X-ray"/>
    <property type="resolution" value="1.56 A"/>
    <property type="chains" value="A/B=20-265"/>
</dbReference>
<dbReference type="PDB" id="5MOX">
    <property type="method" value="X-ray"/>
    <property type="resolution" value="1.41 A"/>
    <property type="chains" value="A/B=20-265"/>
</dbReference>
<dbReference type="PDB" id="5MOZ">
    <property type="method" value="X-ray"/>
    <property type="resolution" value="1.34 A"/>
    <property type="chains" value="A/B=20-265"/>
</dbReference>
<dbReference type="PDB" id="6RTN">
    <property type="method" value="X-ray"/>
    <property type="resolution" value="2.17 A"/>
    <property type="chains" value="A/B=20-265"/>
</dbReference>
<dbReference type="PDB" id="7B3R">
    <property type="method" value="X-ray"/>
    <property type="resolution" value="1.83 A"/>
    <property type="chains" value="A/B=20-265"/>
</dbReference>
<dbReference type="PDB" id="7B3S">
    <property type="method" value="X-ray"/>
    <property type="resolution" value="1.85 A"/>
    <property type="chains" value="A/B=20-265"/>
</dbReference>
<dbReference type="PDB" id="7B3U">
    <property type="method" value="X-ray"/>
    <property type="resolution" value="1.60 A"/>
    <property type="chains" value="A/B=20-265"/>
</dbReference>
<dbReference type="PDB" id="7L5R">
    <property type="method" value="X-ray"/>
    <property type="resolution" value="1.65 A"/>
    <property type="chains" value="A/B=21-266"/>
</dbReference>
<dbReference type="PDB" id="7L5T">
    <property type="method" value="X-ray"/>
    <property type="resolution" value="1.88 A"/>
    <property type="chains" value="A/B=21-266"/>
</dbReference>
<dbReference type="PDB" id="7L5V">
    <property type="method" value="X-ray"/>
    <property type="resolution" value="1.30 A"/>
    <property type="chains" value="A/B=19-266"/>
</dbReference>
<dbReference type="PDBsum" id="1E3U"/>
<dbReference type="PDBsum" id="1E4D"/>
<dbReference type="PDBsum" id="1EWZ"/>
<dbReference type="PDBsum" id="1FOF"/>
<dbReference type="PDBsum" id="1K4E"/>
<dbReference type="PDBsum" id="1K4F"/>
<dbReference type="PDBsum" id="1K54"/>
<dbReference type="PDBsum" id="1K55"/>
<dbReference type="PDBsum" id="1K56"/>
<dbReference type="PDBsum" id="1K57"/>
<dbReference type="PDBsum" id="1K6R"/>
<dbReference type="PDBsum" id="1K6S"/>
<dbReference type="PDBsum" id="2HP5"/>
<dbReference type="PDBsum" id="2HP6"/>
<dbReference type="PDBsum" id="2HP9"/>
<dbReference type="PDBsum" id="2HPB"/>
<dbReference type="PDBsum" id="2RL3"/>
<dbReference type="PDBsum" id="2WGI"/>
<dbReference type="PDBsum" id="2WGV"/>
<dbReference type="PDBsum" id="2WGW"/>
<dbReference type="PDBsum" id="2WKH"/>
<dbReference type="PDBsum" id="2WKI"/>
<dbReference type="PDBsum" id="2X01"/>
<dbReference type="PDBsum" id="2X02"/>
<dbReference type="PDBsum" id="3LCE"/>
<dbReference type="PDBsum" id="4S2O"/>
<dbReference type="PDBsum" id="4WZ5"/>
<dbReference type="PDBsum" id="5FQ9"/>
<dbReference type="PDBsum" id="5MMY"/>
<dbReference type="PDBsum" id="5MNU"/>
<dbReference type="PDBsum" id="5MOX"/>
<dbReference type="PDBsum" id="5MOZ"/>
<dbReference type="PDBsum" id="6RTN"/>
<dbReference type="PDBsum" id="7B3R"/>
<dbReference type="PDBsum" id="7B3S"/>
<dbReference type="PDBsum" id="7B3U"/>
<dbReference type="PDBsum" id="7L5R"/>
<dbReference type="PDBsum" id="7L5T"/>
<dbReference type="PDBsum" id="7L5V"/>
<dbReference type="SMR" id="P14489"/>
<dbReference type="BindingDB" id="P14489"/>
<dbReference type="ChEMBL" id="CHEMBL5482"/>
<dbReference type="DrugBank" id="DB02122">
    <property type="generic name" value="4-iodo-acetamido phenylboronic acid"/>
</dbReference>
<dbReference type="DrugBank" id="DB04342">
    <property type="generic name" value="7-((Carboxy(4-Hydroxyphenyl)Acetyl)Amino)-7-Methoxy-(3-((1-Methyl-1h-Tetrazol-5-Yl)Thio)Methyl)-8-Oxo-5-Oxa-1-Azabicyclo[4.2.0]Oct-2-Ene-2-Carboxylic Acid"/>
</dbReference>
<dbReference type="DrugBank" id="DB03801">
    <property type="generic name" value="Lysine Nz-Carboxylic Acid"/>
</dbReference>
<dbReference type="DrugBank" id="DB00760">
    <property type="generic name" value="Meropenem"/>
</dbReference>
<dbReference type="CARD" id="ARO:3001405">
    <property type="molecule name" value="OXA-10"/>
    <property type="mechanism identifier" value="ARO:0001004"/>
    <property type="mechanism name" value="antibiotic inactivation"/>
</dbReference>
<dbReference type="KEGG" id="ag:AAB60534"/>
<dbReference type="BRENDA" id="3.5.2.6">
    <property type="organism ID" value="5087"/>
</dbReference>
<dbReference type="EvolutionaryTrace" id="P14489"/>
<dbReference type="PRO" id="PR:P14489"/>
<dbReference type="GO" id="GO:0042597">
    <property type="term" value="C:periplasmic space"/>
    <property type="evidence" value="ECO:0007669"/>
    <property type="project" value="UniProtKB-SubCell"/>
</dbReference>
<dbReference type="GO" id="GO:0005886">
    <property type="term" value="C:plasma membrane"/>
    <property type="evidence" value="ECO:0007669"/>
    <property type="project" value="TreeGrafter"/>
</dbReference>
<dbReference type="GO" id="GO:0008800">
    <property type="term" value="F:beta-lactamase activity"/>
    <property type="evidence" value="ECO:0007669"/>
    <property type="project" value="UniProtKB-EC"/>
</dbReference>
<dbReference type="GO" id="GO:0008658">
    <property type="term" value="F:penicillin binding"/>
    <property type="evidence" value="ECO:0007669"/>
    <property type="project" value="InterPro"/>
</dbReference>
<dbReference type="GO" id="GO:0017001">
    <property type="term" value="P:antibiotic catabolic process"/>
    <property type="evidence" value="ECO:0007669"/>
    <property type="project" value="InterPro"/>
</dbReference>
<dbReference type="GO" id="GO:0071555">
    <property type="term" value="P:cell wall organization"/>
    <property type="evidence" value="ECO:0007669"/>
    <property type="project" value="TreeGrafter"/>
</dbReference>
<dbReference type="GO" id="GO:0046677">
    <property type="term" value="P:response to antibiotic"/>
    <property type="evidence" value="ECO:0007669"/>
    <property type="project" value="UniProtKB-KW"/>
</dbReference>
<dbReference type="Gene3D" id="3.40.710.10">
    <property type="entry name" value="DD-peptidase/beta-lactamase superfamily"/>
    <property type="match status" value="1"/>
</dbReference>
<dbReference type="InterPro" id="IPR050515">
    <property type="entry name" value="Bact_Transpept/Beta-Lactamase"/>
</dbReference>
<dbReference type="InterPro" id="IPR012338">
    <property type="entry name" value="Beta-lactam/transpept-like"/>
</dbReference>
<dbReference type="InterPro" id="IPR002137">
    <property type="entry name" value="Beta-lactam_class-D_AS"/>
</dbReference>
<dbReference type="InterPro" id="IPR001460">
    <property type="entry name" value="PCN-bd_Tpept"/>
</dbReference>
<dbReference type="NCBIfam" id="NF012161">
    <property type="entry name" value="bla_class_D_main"/>
    <property type="match status" value="1"/>
</dbReference>
<dbReference type="NCBIfam" id="NF000386">
    <property type="entry name" value="blaOXA-10_like"/>
    <property type="match status" value="1"/>
</dbReference>
<dbReference type="PANTHER" id="PTHR30627:SF6">
    <property type="entry name" value="BETA-LACTAMASE YBXI-RELATED"/>
    <property type="match status" value="1"/>
</dbReference>
<dbReference type="PANTHER" id="PTHR30627">
    <property type="entry name" value="PEPTIDOGLYCAN D,D-TRANSPEPTIDASE"/>
    <property type="match status" value="1"/>
</dbReference>
<dbReference type="Pfam" id="PF00905">
    <property type="entry name" value="Transpeptidase"/>
    <property type="match status" value="1"/>
</dbReference>
<dbReference type="SUPFAM" id="SSF56601">
    <property type="entry name" value="beta-lactamase/transpeptidase-like"/>
    <property type="match status" value="1"/>
</dbReference>
<dbReference type="PROSITE" id="PS00337">
    <property type="entry name" value="BETA_LACTAMASE_D"/>
    <property type="match status" value="1"/>
</dbReference>
<protein>
    <recommendedName>
        <fullName evidence="12">Beta-lactamase OXA-10</fullName>
        <ecNumber evidence="2 4 5 6 8">3.5.2.6</ecNumber>
    </recommendedName>
    <alternativeName>
        <fullName evidence="10">Beta-lactamase PSE-2</fullName>
    </alternativeName>
</protein>
<organism>
    <name type="scientific">Pseudomonas aeruginosa</name>
    <dbReference type="NCBI Taxonomy" id="287"/>
    <lineage>
        <taxon>Bacteria</taxon>
        <taxon>Pseudomonadati</taxon>
        <taxon>Pseudomonadota</taxon>
        <taxon>Gammaproteobacteria</taxon>
        <taxon>Pseudomonadales</taxon>
        <taxon>Pseudomonadaceae</taxon>
        <taxon>Pseudomonas</taxon>
    </lineage>
</organism>
<proteinExistence type="evidence at protein level"/>
<name>BLO10_PSEAI</name>
<accession>P14489</accession>
<reference key="1">
    <citation type="journal article" date="1988" name="Antimicrob. Agents Chemother.">
        <title>Sequence of PSE-2 beta-lactamase.</title>
        <authorList>
            <person name="Huovinen P."/>
            <person name="Huovinen S."/>
            <person name="Jacoby G.A."/>
        </authorList>
    </citation>
    <scope>NUCLEOTIDE SEQUENCE [GENOMIC DNA]</scope>
    <source>
        <transposon>Tn1404</transposon>
    </source>
</reference>
<reference key="2">
    <citation type="journal article" date="1993" name="Antimicrob. Agents Chemother.">
        <title>OXA-11, an extended-spectrum variant of OXA-10 (PSE-2) beta-lactamase from Pseudomonas aeruginosa.</title>
        <authorList>
            <person name="Hall L.M.C."/>
            <person name="Livermore D.M."/>
            <person name="Gur D."/>
            <person name="Akova M."/>
            <person name="Akalin H.E."/>
        </authorList>
    </citation>
    <scope>FUNCTION</scope>
    <scope>CATALYTIC ACTIVITY</scope>
    <scope>NOMENCLATURE</scope>
</reference>
<reference key="3">
    <citation type="journal article" date="2019" name="Antimicrob. Agents Chemother.">
        <title>Characterization of the First OXA-10 Natural Variant with Increased Carbapenemase Activity.</title>
        <authorList>
            <person name="Kotsakis S.D."/>
            <person name="Flach C.F."/>
            <person name="Razavi M."/>
            <person name="Larsson D.G.J."/>
        </authorList>
    </citation>
    <scope>FUNCTION</scope>
    <scope>CATALYTIC ACTIVITY</scope>
    <scope>MUTAGENESIS OF THR-26 AND VAL-117</scope>
</reference>
<reference key="4">
    <citation type="journal article" date="2022" name="Antimicrob. Agents Chemother.">
        <title>Functional and Structural Characterization of OXA-935, a Novel OXA-10-Family beta-Lactamase from Pseudomonas aeruginosa.</title>
        <authorList>
            <person name="Pincus N.B."/>
            <person name="Rosas-Lemus M."/>
            <person name="Gatesy S.W.M."/>
            <person name="Bertucci H.K."/>
            <person name="Brunzelle J.S."/>
            <person name="Minasov G."/>
            <person name="Shuvalova L.A."/>
            <person name="Lebrun-Corbin M."/>
            <person name="Satchell K.J.F."/>
            <person name="Ozer E.A."/>
            <person name="Hauser A.R."/>
            <person name="Bachta K.E.R."/>
        </authorList>
    </citation>
    <scope>FUNCTION</scope>
    <scope>MUTAGENESIS OF PHE-153 AND GLY-157</scope>
    <source>
        <strain evidence="11">PA01</strain>
        <strain evidence="11">PA14</strain>
        <strain evidence="11">PS1793</strain>
        <strain evidence="11">PS1796</strain>
        <strain evidence="11">PS1797</strain>
        <plasmid evidence="11">PS1793_p1</plasmid>
    </source>
</reference>
<reference key="5">
    <citation type="journal article" date="2000" name="Structure">
        <title>Insights into class D beta-lactamases are revealed by the crystal structure of the OXA10 enzyme from Pseudomonas aeruginosa.</title>
        <authorList>
            <person name="Maveyraud L."/>
            <person name="Golemi D."/>
            <person name="Kotra L.P."/>
            <person name="Tranier S."/>
            <person name="Vakulenko S."/>
            <person name="Mobashery S."/>
            <person name="Samama J.-P."/>
        </authorList>
    </citation>
    <scope>X-RAY CRYSTALLOGRAPHY (1.66 ANGSTROMS) OF 21-266</scope>
    <scope>SUBUNIT</scope>
    <scope>CARBOXYLATION AT LYS-70</scope>
</reference>
<reference evidence="17 18 19 20" key="6">
    <citation type="journal article" date="2001" name="Proc. Natl. Acad. Sci. U.S.A.">
        <title>Critical involvement of a carbamylated lysine in catalytic function of class D beta-lactamases.</title>
        <authorList>
            <person name="Golemi D."/>
            <person name="Maveyraud L."/>
            <person name="Vakulenko S."/>
            <person name="Samama J.P."/>
            <person name="Mobashery S."/>
        </authorList>
    </citation>
    <scope>X-RAY CRYSTALLOGRAPHY (1.39 ANGSTROMS) OF 21-266 IN APO FORMS AND IN COMPLEX WITH INHIBITOR</scope>
    <scope>FUNCTION</scope>
    <scope>CATALYTIC ACTIVITY</scope>
    <scope>BIOPHYSICOCHEMICAL PROPERTIES</scope>
    <scope>SUBUNIT</scope>
    <scope>SUBCELLULAR LOCATION</scope>
    <scope>ACTIVE SITE</scope>
    <scope>CARBOXYLATION AT LYS-70</scope>
    <scope>MUTAGENESIS OF LYS-70</scope>
</reference>
<reference evidence="22 23 24 25 26 27" key="7">
    <citation type="journal article" date="2009" name="Biochemistry">
        <title>Critical role of tryptophan 154 for the activity and stability of class D beta-lactamases.</title>
        <authorList>
            <person name="Baurin S."/>
            <person name="Vercheval L."/>
            <person name="Bouillenne F."/>
            <person name="Falzone C."/>
            <person name="Brans A."/>
            <person name="Jacquamet L."/>
            <person name="Ferrer J.L."/>
            <person name="Sauvage E."/>
            <person name="Dehareng D."/>
            <person name="Frere J.M."/>
            <person name="Charlier P."/>
            <person name="Galleni M."/>
            <person name="Kerff F."/>
        </authorList>
    </citation>
    <scope>X-RAY CRYSTALLOGRAPHY (1.90 ANGSTROMS) OF 20-266 FOR APO FORMS OF MUTANTS ALA-154; GLY-154 AND HIS-154 AND IN COMPLEX WITH SUBSTRATE</scope>
    <scope>FUNCTION</scope>
    <scope>CATALYTIC ACTIVITY</scope>
    <scope>BIOPHYSICOCHEMICAL PROPERTIES</scope>
    <scope>ACTIVITY REGULATION</scope>
    <scope>ACTIVE SITE</scope>
    <scope>CARBOXYLATION AT LYS-70</scope>
    <scope>MUTAGENESIS OF TRP-154</scope>
</reference>
<geneLocation type="plasmid">
    <name>pMON234</name>
</geneLocation>
<geneLocation type="plasmid" evidence="11">
    <name>PS1793_p1</name>
</geneLocation>
<gene>
    <name evidence="12" type="primary">OXA-10</name>
    <name type="synonym">bla</name>
    <name evidence="9" type="synonym">oxa10</name>
    <name evidence="10" type="synonym">pse2</name>
</gene>